<dbReference type="EMBL" id="BA000037">
    <property type="protein sequence ID" value="BAC92944.1"/>
    <property type="molecule type" value="Genomic_DNA"/>
</dbReference>
<dbReference type="RefSeq" id="WP_011149183.1">
    <property type="nucleotide sequence ID" value="NC_005139.1"/>
</dbReference>
<dbReference type="SMR" id="Q7MQ30"/>
<dbReference type="STRING" id="672.VV93_v1c01670"/>
<dbReference type="KEGG" id="vvy:VV0180"/>
<dbReference type="eggNOG" id="COG1826">
    <property type="taxonomic scope" value="Bacteria"/>
</dbReference>
<dbReference type="HOGENOM" id="CLU_086034_5_1_6"/>
<dbReference type="Proteomes" id="UP000002675">
    <property type="component" value="Chromosome I"/>
</dbReference>
<dbReference type="GO" id="GO:0033281">
    <property type="term" value="C:TAT protein transport complex"/>
    <property type="evidence" value="ECO:0007669"/>
    <property type="project" value="UniProtKB-UniRule"/>
</dbReference>
<dbReference type="GO" id="GO:0008320">
    <property type="term" value="F:protein transmembrane transporter activity"/>
    <property type="evidence" value="ECO:0007669"/>
    <property type="project" value="UniProtKB-UniRule"/>
</dbReference>
<dbReference type="GO" id="GO:0043953">
    <property type="term" value="P:protein transport by the Tat complex"/>
    <property type="evidence" value="ECO:0007669"/>
    <property type="project" value="UniProtKB-UniRule"/>
</dbReference>
<dbReference type="FunFam" id="1.20.5.3310:FF:000001">
    <property type="entry name" value="Probable Sec-independent protein translocase protein TatE"/>
    <property type="match status" value="1"/>
</dbReference>
<dbReference type="Gene3D" id="1.20.5.3310">
    <property type="match status" value="1"/>
</dbReference>
<dbReference type="HAMAP" id="MF_00236">
    <property type="entry name" value="TatA_E"/>
    <property type="match status" value="1"/>
</dbReference>
<dbReference type="InterPro" id="IPR003369">
    <property type="entry name" value="TatA/B/E"/>
</dbReference>
<dbReference type="InterPro" id="IPR006312">
    <property type="entry name" value="TatA/E"/>
</dbReference>
<dbReference type="NCBIfam" id="NF002500">
    <property type="entry name" value="PRK01833.1"/>
    <property type="match status" value="1"/>
</dbReference>
<dbReference type="NCBIfam" id="NF002813">
    <property type="entry name" value="PRK02958.1"/>
    <property type="match status" value="1"/>
</dbReference>
<dbReference type="NCBIfam" id="NF003396">
    <property type="entry name" value="PRK04598.1"/>
    <property type="match status" value="1"/>
</dbReference>
<dbReference type="NCBIfam" id="TIGR01411">
    <property type="entry name" value="tatAE"/>
    <property type="match status" value="1"/>
</dbReference>
<dbReference type="PANTHER" id="PTHR42982">
    <property type="entry name" value="SEC-INDEPENDENT PROTEIN TRANSLOCASE PROTEIN TATA"/>
    <property type="match status" value="1"/>
</dbReference>
<dbReference type="PANTHER" id="PTHR42982:SF1">
    <property type="entry name" value="SEC-INDEPENDENT PROTEIN TRANSLOCASE PROTEIN TATA"/>
    <property type="match status" value="1"/>
</dbReference>
<dbReference type="Pfam" id="PF02416">
    <property type="entry name" value="TatA_B_E"/>
    <property type="match status" value="1"/>
</dbReference>
<proteinExistence type="inferred from homology"/>
<gene>
    <name evidence="1" type="primary">tatA</name>
    <name type="ordered locus">VV0180</name>
</gene>
<organism>
    <name type="scientific">Vibrio vulnificus (strain YJ016)</name>
    <dbReference type="NCBI Taxonomy" id="196600"/>
    <lineage>
        <taxon>Bacteria</taxon>
        <taxon>Pseudomonadati</taxon>
        <taxon>Pseudomonadota</taxon>
        <taxon>Gammaproteobacteria</taxon>
        <taxon>Vibrionales</taxon>
        <taxon>Vibrionaceae</taxon>
        <taxon>Vibrio</taxon>
    </lineage>
</organism>
<feature type="chain" id="PRO_0000097965" description="Sec-independent protein translocase protein TatA">
    <location>
        <begin position="1"/>
        <end position="78"/>
    </location>
</feature>
<feature type="transmembrane region" description="Helical" evidence="1">
    <location>
        <begin position="1"/>
        <end position="21"/>
    </location>
</feature>
<feature type="region of interest" description="Disordered" evidence="2">
    <location>
        <begin position="47"/>
        <end position="78"/>
    </location>
</feature>
<feature type="compositionally biased region" description="Basic and acidic residues" evidence="2">
    <location>
        <begin position="47"/>
        <end position="59"/>
    </location>
</feature>
<feature type="compositionally biased region" description="Polar residues" evidence="2">
    <location>
        <begin position="60"/>
        <end position="69"/>
    </location>
</feature>
<name>TATA_VIBVY</name>
<comment type="function">
    <text evidence="1">Part of the twin-arginine translocation (Tat) system that transports large folded proteins containing a characteristic twin-arginine motif in their signal peptide across membranes. TatA could form the protein-conducting channel of the Tat system.</text>
</comment>
<comment type="subunit">
    <text evidence="1">The Tat system comprises two distinct complexes: a TatABC complex, containing multiple copies of TatA, TatB and TatC subunits, and a separate TatA complex, containing only TatA subunits. Substrates initially bind to the TatABC complex, which probably triggers association of the separate TatA complex to form the active translocon.</text>
</comment>
<comment type="subcellular location">
    <subcellularLocation>
        <location evidence="1">Cell inner membrane</location>
        <topology evidence="1">Single-pass membrane protein</topology>
    </subcellularLocation>
</comment>
<comment type="similarity">
    <text evidence="1">Belongs to the TatA/E family.</text>
</comment>
<accession>Q7MQ30</accession>
<evidence type="ECO:0000255" key="1">
    <source>
        <dbReference type="HAMAP-Rule" id="MF_00236"/>
    </source>
</evidence>
<evidence type="ECO:0000256" key="2">
    <source>
        <dbReference type="SAM" id="MobiDB-lite"/>
    </source>
</evidence>
<protein>
    <recommendedName>
        <fullName evidence="1">Sec-independent protein translocase protein TatA</fullName>
    </recommendedName>
</protein>
<reference key="1">
    <citation type="journal article" date="2003" name="Genome Res.">
        <title>Comparative genome analysis of Vibrio vulnificus, a marine pathogen.</title>
        <authorList>
            <person name="Chen C.-Y."/>
            <person name="Wu K.-M."/>
            <person name="Chang Y.-C."/>
            <person name="Chang C.-H."/>
            <person name="Tsai H.-C."/>
            <person name="Liao T.-L."/>
            <person name="Liu Y.-M."/>
            <person name="Chen H.-J."/>
            <person name="Shen A.B.-T."/>
            <person name="Li J.-C."/>
            <person name="Su T.-L."/>
            <person name="Shao C.-P."/>
            <person name="Lee C.-T."/>
            <person name="Hor L.-I."/>
            <person name="Tsai S.-F."/>
        </authorList>
    </citation>
    <scope>NUCLEOTIDE SEQUENCE [LARGE SCALE GENOMIC DNA]</scope>
    <source>
        <strain>YJ016</strain>
    </source>
</reference>
<keyword id="KW-0997">Cell inner membrane</keyword>
<keyword id="KW-1003">Cell membrane</keyword>
<keyword id="KW-0472">Membrane</keyword>
<keyword id="KW-0653">Protein transport</keyword>
<keyword id="KW-0811">Translocation</keyword>
<keyword id="KW-0812">Transmembrane</keyword>
<keyword id="KW-1133">Transmembrane helix</keyword>
<keyword id="KW-0813">Transport</keyword>
<sequence length="78" mass="8535">MGGISIWQLLIIAVIVVLLFGTKKLRGIGSDLGGAIKGFKKAMNEEESEKKDADFEPKSLEQQNKQAATESKKDKEQA</sequence>